<dbReference type="EMBL" id="AL391151">
    <property type="protein sequence ID" value="CAC01906.1"/>
    <property type="status" value="ALT_SEQ"/>
    <property type="molecule type" value="Genomic_DNA"/>
</dbReference>
<dbReference type="EMBL" id="CP002688">
    <property type="protein sequence ID" value="AED92449.1"/>
    <property type="molecule type" value="Genomic_DNA"/>
</dbReference>
<dbReference type="EMBL" id="AK227456">
    <property type="protein sequence ID" value="BAE99459.1"/>
    <property type="molecule type" value="mRNA"/>
</dbReference>
<dbReference type="EMBL" id="AK227507">
    <property type="protein sequence ID" value="BAE99507.1"/>
    <property type="molecule type" value="mRNA"/>
</dbReference>
<dbReference type="EMBL" id="AK220925">
    <property type="protein sequence ID" value="BAD94397.1"/>
    <property type="molecule type" value="mRNA"/>
</dbReference>
<dbReference type="EMBL" id="BT033086">
    <property type="protein sequence ID" value="ACF04809.1"/>
    <property type="molecule type" value="mRNA"/>
</dbReference>
<dbReference type="EMBL" id="AY086231">
    <property type="protein sequence ID" value="AAM64307.1"/>
    <property type="molecule type" value="mRNA"/>
</dbReference>
<dbReference type="PIR" id="T51466">
    <property type="entry name" value="T51466"/>
</dbReference>
<dbReference type="RefSeq" id="NP_568354.1">
    <property type="nucleotide sequence ID" value="NM_121768.5"/>
</dbReference>
<dbReference type="SMR" id="Q0WTP1"/>
<dbReference type="FunCoup" id="Q0WTP1">
    <property type="interactions" value="1990"/>
</dbReference>
<dbReference type="STRING" id="3702.Q0WTP1"/>
<dbReference type="GlyGen" id="Q0WTP1">
    <property type="glycosylation" value="1 site"/>
</dbReference>
<dbReference type="PaxDb" id="3702-AT5G17620.1"/>
<dbReference type="ProteomicsDB" id="241013"/>
<dbReference type="EnsemblPlants" id="AT5G17620.1">
    <property type="protein sequence ID" value="AT5G17620.1"/>
    <property type="gene ID" value="AT5G17620"/>
</dbReference>
<dbReference type="GeneID" id="831628"/>
<dbReference type="Gramene" id="AT5G17620.1">
    <property type="protein sequence ID" value="AT5G17620.1"/>
    <property type="gene ID" value="AT5G17620"/>
</dbReference>
<dbReference type="KEGG" id="ath:AT5G17620"/>
<dbReference type="Araport" id="AT5G17620"/>
<dbReference type="TAIR" id="AT5G17620">
    <property type="gene designation" value="AUG7"/>
</dbReference>
<dbReference type="eggNOG" id="ENOG502QR4M">
    <property type="taxonomic scope" value="Eukaryota"/>
</dbReference>
<dbReference type="HOGENOM" id="CLU_073448_0_0_1"/>
<dbReference type="InParanoid" id="Q0WTP1"/>
<dbReference type="OMA" id="SMYADNP"/>
<dbReference type="PhylomeDB" id="Q0WTP1"/>
<dbReference type="PRO" id="PR:Q0WTP1"/>
<dbReference type="Proteomes" id="UP000006548">
    <property type="component" value="Chromosome 5"/>
</dbReference>
<dbReference type="ExpressionAtlas" id="Q0WTP1">
    <property type="expression patterns" value="baseline and differential"/>
</dbReference>
<dbReference type="GO" id="GO:0009524">
    <property type="term" value="C:phragmoplast"/>
    <property type="evidence" value="ECO:0000314"/>
    <property type="project" value="TAIR"/>
</dbReference>
<dbReference type="GO" id="GO:0005876">
    <property type="term" value="C:spindle microtubule"/>
    <property type="evidence" value="ECO:0000314"/>
    <property type="project" value="TAIR"/>
</dbReference>
<dbReference type="GO" id="GO:0051011">
    <property type="term" value="F:microtubule minus-end binding"/>
    <property type="evidence" value="ECO:0000314"/>
    <property type="project" value="TAIR"/>
</dbReference>
<dbReference type="GO" id="GO:0051301">
    <property type="term" value="P:cell division"/>
    <property type="evidence" value="ECO:0007669"/>
    <property type="project" value="UniProtKB-KW"/>
</dbReference>
<dbReference type="InterPro" id="IPR029711">
    <property type="entry name" value="Haus7-like"/>
</dbReference>
<dbReference type="InterPro" id="IPR010604">
    <property type="entry name" value="Plant_AUG7"/>
</dbReference>
<dbReference type="PANTHER" id="PTHR14352">
    <property type="entry name" value="HAUS AUGMIN-LIKE COMPLEX SUBUNIT 7"/>
    <property type="match status" value="1"/>
</dbReference>
<dbReference type="PANTHER" id="PTHR14352:SF2">
    <property type="entry name" value="HAUS AUGMIN-LIKE COMPLEX SUBUNIT 7"/>
    <property type="match status" value="1"/>
</dbReference>
<dbReference type="Pfam" id="PF06694">
    <property type="entry name" value="Plant_NMP1"/>
    <property type="match status" value="1"/>
</dbReference>
<dbReference type="PIRSF" id="PIRSF028655">
    <property type="entry name" value="Plant_NMP1"/>
    <property type="match status" value="1"/>
</dbReference>
<gene>
    <name evidence="3" type="primary">AUG7</name>
    <name evidence="5" type="ordered locus">At5g17620</name>
    <name evidence="7" type="ORF">K10A8.100</name>
</gene>
<reference key="1">
    <citation type="journal article" date="2000" name="Nature">
        <title>Sequence and analysis of chromosome 5 of the plant Arabidopsis thaliana.</title>
        <authorList>
            <person name="Tabata S."/>
            <person name="Kaneko T."/>
            <person name="Nakamura Y."/>
            <person name="Kotani H."/>
            <person name="Kato T."/>
            <person name="Asamizu E."/>
            <person name="Miyajima N."/>
            <person name="Sasamoto S."/>
            <person name="Kimura T."/>
            <person name="Hosouchi T."/>
            <person name="Kawashima K."/>
            <person name="Kohara M."/>
            <person name="Matsumoto M."/>
            <person name="Matsuno A."/>
            <person name="Muraki A."/>
            <person name="Nakayama S."/>
            <person name="Nakazaki N."/>
            <person name="Naruo K."/>
            <person name="Okumura S."/>
            <person name="Shinpo S."/>
            <person name="Takeuchi C."/>
            <person name="Wada T."/>
            <person name="Watanabe A."/>
            <person name="Yamada M."/>
            <person name="Yasuda M."/>
            <person name="Sato S."/>
            <person name="de la Bastide M."/>
            <person name="Huang E."/>
            <person name="Spiegel L."/>
            <person name="Gnoj L."/>
            <person name="O'Shaughnessy A."/>
            <person name="Preston R."/>
            <person name="Habermann K."/>
            <person name="Murray J."/>
            <person name="Johnson D."/>
            <person name="Rohlfing T."/>
            <person name="Nelson J."/>
            <person name="Stoneking T."/>
            <person name="Pepin K."/>
            <person name="Spieth J."/>
            <person name="Sekhon M."/>
            <person name="Armstrong J."/>
            <person name="Becker M."/>
            <person name="Belter E."/>
            <person name="Cordum H."/>
            <person name="Cordes M."/>
            <person name="Courtney L."/>
            <person name="Courtney W."/>
            <person name="Dante M."/>
            <person name="Du H."/>
            <person name="Edwards J."/>
            <person name="Fryman J."/>
            <person name="Haakensen B."/>
            <person name="Lamar E."/>
            <person name="Latreille P."/>
            <person name="Leonard S."/>
            <person name="Meyer R."/>
            <person name="Mulvaney E."/>
            <person name="Ozersky P."/>
            <person name="Riley A."/>
            <person name="Strowmatt C."/>
            <person name="Wagner-McPherson C."/>
            <person name="Wollam A."/>
            <person name="Yoakum M."/>
            <person name="Bell M."/>
            <person name="Dedhia N."/>
            <person name="Parnell L."/>
            <person name="Shah R."/>
            <person name="Rodriguez M."/>
            <person name="Hoon See L."/>
            <person name="Vil D."/>
            <person name="Baker J."/>
            <person name="Kirchoff K."/>
            <person name="Toth K."/>
            <person name="King L."/>
            <person name="Bahret A."/>
            <person name="Miller B."/>
            <person name="Marra M.A."/>
            <person name="Martienssen R."/>
            <person name="McCombie W.R."/>
            <person name="Wilson R.K."/>
            <person name="Murphy G."/>
            <person name="Bancroft I."/>
            <person name="Volckaert G."/>
            <person name="Wambutt R."/>
            <person name="Duesterhoeft A."/>
            <person name="Stiekema W."/>
            <person name="Pohl T."/>
            <person name="Entian K.-D."/>
            <person name="Terryn N."/>
            <person name="Hartley N."/>
            <person name="Bent E."/>
            <person name="Johnson S."/>
            <person name="Langham S.-A."/>
            <person name="McCullagh B."/>
            <person name="Robben J."/>
            <person name="Grymonprez B."/>
            <person name="Zimmermann W."/>
            <person name="Ramsperger U."/>
            <person name="Wedler H."/>
            <person name="Balke K."/>
            <person name="Wedler E."/>
            <person name="Peters S."/>
            <person name="van Staveren M."/>
            <person name="Dirkse W."/>
            <person name="Mooijman P."/>
            <person name="Klein Lankhorst R."/>
            <person name="Weitzenegger T."/>
            <person name="Bothe G."/>
            <person name="Rose M."/>
            <person name="Hauf J."/>
            <person name="Berneiser S."/>
            <person name="Hempel S."/>
            <person name="Feldpausch M."/>
            <person name="Lamberth S."/>
            <person name="Villarroel R."/>
            <person name="Gielen J."/>
            <person name="Ardiles W."/>
            <person name="Bents O."/>
            <person name="Lemcke K."/>
            <person name="Kolesov G."/>
            <person name="Mayer K.F.X."/>
            <person name="Rudd S."/>
            <person name="Schoof H."/>
            <person name="Schueller C."/>
            <person name="Zaccaria P."/>
            <person name="Mewes H.-W."/>
            <person name="Bevan M."/>
            <person name="Fransz P.F."/>
        </authorList>
    </citation>
    <scope>NUCLEOTIDE SEQUENCE [LARGE SCALE GENOMIC DNA]</scope>
    <source>
        <strain>cv. Columbia</strain>
    </source>
</reference>
<reference key="2">
    <citation type="journal article" date="2017" name="Plant J.">
        <title>Araport11: a complete reannotation of the Arabidopsis thaliana reference genome.</title>
        <authorList>
            <person name="Cheng C.Y."/>
            <person name="Krishnakumar V."/>
            <person name="Chan A.P."/>
            <person name="Thibaud-Nissen F."/>
            <person name="Schobel S."/>
            <person name="Town C.D."/>
        </authorList>
    </citation>
    <scope>GENOME REANNOTATION</scope>
    <source>
        <strain>cv. Columbia</strain>
    </source>
</reference>
<reference key="3">
    <citation type="submission" date="2006-07" db="EMBL/GenBank/DDBJ databases">
        <title>Large-scale analysis of RIKEN Arabidopsis full-length (RAFL) cDNAs.</title>
        <authorList>
            <person name="Totoki Y."/>
            <person name="Seki M."/>
            <person name="Ishida J."/>
            <person name="Nakajima M."/>
            <person name="Enju A."/>
            <person name="Kamiya A."/>
            <person name="Narusaka M."/>
            <person name="Shin-i T."/>
            <person name="Nakagawa M."/>
            <person name="Sakamoto N."/>
            <person name="Oishi K."/>
            <person name="Kohara Y."/>
            <person name="Kobayashi M."/>
            <person name="Toyoda A."/>
            <person name="Sakaki Y."/>
            <person name="Sakurai T."/>
            <person name="Iida K."/>
            <person name="Akiyama K."/>
            <person name="Satou M."/>
            <person name="Toyoda T."/>
            <person name="Konagaya A."/>
            <person name="Carninci P."/>
            <person name="Kawai J."/>
            <person name="Hayashizaki Y."/>
            <person name="Shinozaki K."/>
        </authorList>
    </citation>
    <scope>NUCLEOTIDE SEQUENCE [LARGE SCALE MRNA]</scope>
    <source>
        <strain>cv. Columbia</strain>
    </source>
</reference>
<reference key="4">
    <citation type="submission" date="2008-06" db="EMBL/GenBank/DDBJ databases">
        <title>Arabidopsis ORF clones.</title>
        <authorList>
            <person name="de los Reyes C."/>
            <person name="Quan R."/>
            <person name="Chen H."/>
            <person name="Bautista V."/>
            <person name="Kim C.J."/>
            <person name="Ecker J.R."/>
        </authorList>
    </citation>
    <scope>NUCLEOTIDE SEQUENCE [LARGE SCALE MRNA]</scope>
    <source>
        <strain>cv. Columbia</strain>
    </source>
</reference>
<reference key="5">
    <citation type="submission" date="2002-03" db="EMBL/GenBank/DDBJ databases">
        <title>Full-length cDNA from Arabidopsis thaliana.</title>
        <authorList>
            <person name="Brover V.V."/>
            <person name="Troukhan M.E."/>
            <person name="Alexandrov N.A."/>
            <person name="Lu Y.-P."/>
            <person name="Flavell R.B."/>
            <person name="Feldmann K.A."/>
        </authorList>
    </citation>
    <scope>NUCLEOTIDE SEQUENCE [LARGE SCALE MRNA]</scope>
</reference>
<reference key="6">
    <citation type="journal article" date="2012" name="Plant Cell">
        <title>Characterization of the Arabidopsis augmin complex uncovers its critical function in the assembly of the acentrosomal spindle and phragmoplast microtubule arrays.</title>
        <authorList>
            <person name="Hotta T."/>
            <person name="Kong Z."/>
            <person name="Ho C.M."/>
            <person name="Zeng C.J."/>
            <person name="Horio T."/>
            <person name="Fong S."/>
            <person name="Vuong T."/>
            <person name="Lee Y.R."/>
            <person name="Liu B."/>
        </authorList>
    </citation>
    <scope>FUNCTION</scope>
    <scope>IDENTIFICATION IN THE AUGMIN COMPLEX BY MASS SPECTROMETRY</scope>
    <scope>SUBCELLULAR LOCATION</scope>
</reference>
<protein>
    <recommendedName>
        <fullName evidence="3">AUGMIN subunit 7</fullName>
    </recommendedName>
</protein>
<evidence type="ECO:0000255" key="1"/>
<evidence type="ECO:0000269" key="2">
    <source>
    </source>
</evidence>
<evidence type="ECO:0000303" key="3">
    <source>
    </source>
</evidence>
<evidence type="ECO:0000305" key="4"/>
<evidence type="ECO:0000312" key="5">
    <source>
        <dbReference type="Araport" id="AT5G17620"/>
    </source>
</evidence>
<evidence type="ECO:0000312" key="6">
    <source>
        <dbReference type="EMBL" id="BAE99507.1"/>
    </source>
</evidence>
<evidence type="ECO:0000312" key="7">
    <source>
        <dbReference type="EMBL" id="CAC01906.1"/>
    </source>
</evidence>
<organism evidence="6">
    <name type="scientific">Arabidopsis thaliana</name>
    <name type="common">Mouse-ear cress</name>
    <dbReference type="NCBI Taxonomy" id="3702"/>
    <lineage>
        <taxon>Eukaryota</taxon>
        <taxon>Viridiplantae</taxon>
        <taxon>Streptophyta</taxon>
        <taxon>Embryophyta</taxon>
        <taxon>Tracheophyta</taxon>
        <taxon>Spermatophyta</taxon>
        <taxon>Magnoliopsida</taxon>
        <taxon>eudicotyledons</taxon>
        <taxon>Gunneridae</taxon>
        <taxon>Pentapetalae</taxon>
        <taxon>rosids</taxon>
        <taxon>malvids</taxon>
        <taxon>Brassicales</taxon>
        <taxon>Brassicaceae</taxon>
        <taxon>Camelineae</taxon>
        <taxon>Arabidopsis</taxon>
    </lineage>
</organism>
<accession>Q0WTP1</accession>
<accession>Q56ZN8</accession>
<accession>Q8LD35</accession>
<accession>Q9LF62</accession>
<feature type="chain" id="PRO_0000434098" description="AUGMIN subunit 7">
    <location>
        <begin position="1"/>
        <end position="329"/>
    </location>
</feature>
<feature type="coiled-coil region" evidence="1">
    <location>
        <begin position="169"/>
        <end position="197"/>
    </location>
</feature>
<feature type="sequence conflict" description="In Ref. 5; AAM64307." evidence="4" ref="5">
    <original>R</original>
    <variation>G</variation>
    <location>
        <position position="14"/>
    </location>
</feature>
<sequence length="329" mass="37009">MAAKQMEEIQKKLRLLSYPRANAPAQSLLFAGMERYALLEWLFFKLLGDKSPFSQQNLQGDAGVRDEETVRIQYLAEIAKFLGITPTVDIEAIQGHGTYEDRMEMLRNIVDLVEASLFSDNQEWSIDEQVAKDIQLIDAIAERQSLIFSEECKLFPADVQIQSIYPLPDVSELETKLSEQAKILSNLQQKVDDLAAKHAYNPDEEYTEVESQLRARLESFLETARAFNTIYTKEIRPWTHMMEVPQLHGFGPAANRLLEAYNMLLKFLGNLKNLRDSHAALSIGSSGTVAGEPSSVTRIVSDCEAALTVLNRDLGILSASIAREQGERL</sequence>
<comment type="function">
    <text evidence="2">Contributes to the assembly of the acentrosomal spindle and phragmoplast microtubule arrays as part of the augmin complex. Regulates the association of gamma-tubulin with the spindle and phragmoplast microtubules.</text>
</comment>
<comment type="subunit">
    <text evidence="2">Part of the augmin complex composed of 8 subunits. The complex acts on microtubules and interacts with gamma-tubulin in spindles and the phragmoplast.</text>
</comment>
<comment type="subcellular location">
    <subcellularLocation>
        <location evidence="2">Cytoplasm</location>
        <location evidence="2">Cytoskeleton</location>
        <location evidence="2">Spindle</location>
    </subcellularLocation>
    <subcellularLocation>
        <location evidence="2">Cytoplasm</location>
        <location evidence="2">Cytoskeleton</location>
        <location evidence="2">Phragmoplast</location>
    </subcellularLocation>
    <text evidence="2">Preferentially localizes to microtubules minus ends.</text>
</comment>
<comment type="sequence caution" evidence="4">
    <conflict type="erroneous gene model prediction">
        <sequence resource="EMBL-CDS" id="CAC01906"/>
    </conflict>
</comment>
<keyword id="KW-0131">Cell cycle</keyword>
<keyword id="KW-0132">Cell division</keyword>
<keyword id="KW-0175">Coiled coil</keyword>
<keyword id="KW-0963">Cytoplasm</keyword>
<keyword id="KW-0206">Cytoskeleton</keyword>
<keyword id="KW-0493">Microtubule</keyword>
<keyword id="KW-0498">Mitosis</keyword>
<keyword id="KW-1185">Reference proteome</keyword>
<proteinExistence type="evidence at protein level"/>
<name>AUG7_ARATH</name>